<dbReference type="EC" id="4.4.1.21" evidence="1"/>
<dbReference type="EMBL" id="AL111168">
    <property type="protein sequence ID" value="CAL35313.1"/>
    <property type="molecule type" value="Genomic_DNA"/>
</dbReference>
<dbReference type="PIR" id="H81325">
    <property type="entry name" value="H81325"/>
</dbReference>
<dbReference type="RefSeq" id="WP_002857890.1">
    <property type="nucleotide sequence ID" value="NZ_SZUC01000001.1"/>
</dbReference>
<dbReference type="RefSeq" id="YP_002344589.1">
    <property type="nucleotide sequence ID" value="NC_002163.1"/>
</dbReference>
<dbReference type="SMR" id="Q9PN97"/>
<dbReference type="IntAct" id="Q9PN97">
    <property type="interactions" value="32"/>
</dbReference>
<dbReference type="STRING" id="192222.Cj1198"/>
<dbReference type="PaxDb" id="192222-Cj1198"/>
<dbReference type="EnsemblBacteria" id="CAL35313">
    <property type="protein sequence ID" value="CAL35313"/>
    <property type="gene ID" value="Cj1198"/>
</dbReference>
<dbReference type="GeneID" id="905488"/>
<dbReference type="KEGG" id="cje:Cj1198"/>
<dbReference type="PATRIC" id="fig|192222.6.peg.1179"/>
<dbReference type="eggNOG" id="COG1854">
    <property type="taxonomic scope" value="Bacteria"/>
</dbReference>
<dbReference type="HOGENOM" id="CLU_107531_2_0_7"/>
<dbReference type="OrthoDB" id="9788129at2"/>
<dbReference type="BRENDA" id="4.4.1.21">
    <property type="organism ID" value="1087"/>
</dbReference>
<dbReference type="Proteomes" id="UP000000799">
    <property type="component" value="Chromosome"/>
</dbReference>
<dbReference type="GO" id="GO:0005506">
    <property type="term" value="F:iron ion binding"/>
    <property type="evidence" value="ECO:0007669"/>
    <property type="project" value="InterPro"/>
</dbReference>
<dbReference type="GO" id="GO:0043768">
    <property type="term" value="F:S-ribosylhomocysteine lyase activity"/>
    <property type="evidence" value="ECO:0007669"/>
    <property type="project" value="UniProtKB-UniRule"/>
</dbReference>
<dbReference type="GO" id="GO:0009372">
    <property type="term" value="P:quorum sensing"/>
    <property type="evidence" value="ECO:0007669"/>
    <property type="project" value="UniProtKB-UniRule"/>
</dbReference>
<dbReference type="Gene3D" id="3.30.1360.80">
    <property type="entry name" value="S-ribosylhomocysteinase (LuxS)"/>
    <property type="match status" value="1"/>
</dbReference>
<dbReference type="HAMAP" id="MF_00091">
    <property type="entry name" value="LuxS"/>
    <property type="match status" value="1"/>
</dbReference>
<dbReference type="InterPro" id="IPR037005">
    <property type="entry name" value="LuxS_sf"/>
</dbReference>
<dbReference type="InterPro" id="IPR011249">
    <property type="entry name" value="Metalloenz_LuxS/M16"/>
</dbReference>
<dbReference type="InterPro" id="IPR003815">
    <property type="entry name" value="S-ribosylhomocysteinase"/>
</dbReference>
<dbReference type="NCBIfam" id="NF002602">
    <property type="entry name" value="PRK02260.1-2"/>
    <property type="match status" value="1"/>
</dbReference>
<dbReference type="PANTHER" id="PTHR35799">
    <property type="entry name" value="S-RIBOSYLHOMOCYSTEINE LYASE"/>
    <property type="match status" value="1"/>
</dbReference>
<dbReference type="PANTHER" id="PTHR35799:SF1">
    <property type="entry name" value="S-RIBOSYLHOMOCYSTEINE LYASE"/>
    <property type="match status" value="1"/>
</dbReference>
<dbReference type="Pfam" id="PF02664">
    <property type="entry name" value="LuxS"/>
    <property type="match status" value="1"/>
</dbReference>
<dbReference type="PIRSF" id="PIRSF006160">
    <property type="entry name" value="AI2"/>
    <property type="match status" value="1"/>
</dbReference>
<dbReference type="PRINTS" id="PR01487">
    <property type="entry name" value="LUXSPROTEIN"/>
</dbReference>
<dbReference type="SUPFAM" id="SSF63411">
    <property type="entry name" value="LuxS/MPP-like metallohydrolase"/>
    <property type="match status" value="1"/>
</dbReference>
<comment type="function">
    <text evidence="1 2">Involved in the synthesis of autoinducer 2 (AI-2) which is secreted by bacteria and is used to communicate both the cell density and the metabolic potential of the environment. The regulation of gene expression in response to changes in cell density is called quorum sensing. Catalyzes the transformation of S-ribosylhomocysteine (RHC) to homocysteine (HC) and 4,5-dihydroxy-2,3-pentadione (DPD).</text>
</comment>
<comment type="catalytic activity">
    <reaction evidence="1">
        <text>S-(5-deoxy-D-ribos-5-yl)-L-homocysteine = (S)-4,5-dihydroxypentane-2,3-dione + L-homocysteine</text>
        <dbReference type="Rhea" id="RHEA:17753"/>
        <dbReference type="ChEBI" id="CHEBI:29484"/>
        <dbReference type="ChEBI" id="CHEBI:58195"/>
        <dbReference type="ChEBI" id="CHEBI:58199"/>
        <dbReference type="EC" id="4.4.1.21"/>
    </reaction>
</comment>
<comment type="cofactor">
    <cofactor evidence="1">
        <name>Fe cation</name>
        <dbReference type="ChEBI" id="CHEBI:24875"/>
    </cofactor>
    <text evidence="1">Binds 1 Fe cation per subunit.</text>
</comment>
<comment type="subunit">
    <text evidence="1">Homodimer.</text>
</comment>
<comment type="similarity">
    <text evidence="1">Belongs to the LuxS family.</text>
</comment>
<proteinExistence type="inferred from homology"/>
<evidence type="ECO:0000255" key="1">
    <source>
        <dbReference type="HAMAP-Rule" id="MF_00091"/>
    </source>
</evidence>
<evidence type="ECO:0000269" key="2">
    <source>
    </source>
</evidence>
<gene>
    <name evidence="1" type="primary">luxS</name>
    <name type="ordered locus">Cj1198</name>
</gene>
<reference key="1">
    <citation type="journal article" date="2000" name="Nature">
        <title>The genome sequence of the food-borne pathogen Campylobacter jejuni reveals hypervariable sequences.</title>
        <authorList>
            <person name="Parkhill J."/>
            <person name="Wren B.W."/>
            <person name="Mungall K.L."/>
            <person name="Ketley J.M."/>
            <person name="Churcher C.M."/>
            <person name="Basham D."/>
            <person name="Chillingworth T."/>
            <person name="Davies R.M."/>
            <person name="Feltwell T."/>
            <person name="Holroyd S."/>
            <person name="Jagels K."/>
            <person name="Karlyshev A.V."/>
            <person name="Moule S."/>
            <person name="Pallen M.J."/>
            <person name="Penn C.W."/>
            <person name="Quail M.A."/>
            <person name="Rajandream M.A."/>
            <person name="Rutherford K.M."/>
            <person name="van Vliet A.H.M."/>
            <person name="Whitehead S."/>
            <person name="Barrell B.G."/>
        </authorList>
    </citation>
    <scope>NUCLEOTIDE SEQUENCE [LARGE SCALE GENOMIC DNA]</scope>
    <source>
        <strain>ATCC 700819 / NCTC 11168</strain>
    </source>
</reference>
<reference key="2">
    <citation type="journal article" date="2002" name="Microbiology">
        <title>Quorum sensing in Campylobacter jejuni: detection of a luxS encoded signalling molecule.</title>
        <authorList>
            <person name="Elvers K.T."/>
            <person name="Park S.F."/>
        </authorList>
    </citation>
    <scope>FUNCTION</scope>
</reference>
<feature type="chain" id="PRO_0000172214" description="S-ribosylhomocysteine lyase">
    <location>
        <begin position="1"/>
        <end position="164"/>
    </location>
</feature>
<feature type="binding site" evidence="1">
    <location>
        <position position="54"/>
    </location>
    <ligand>
        <name>Fe cation</name>
        <dbReference type="ChEBI" id="CHEBI:24875"/>
    </ligand>
</feature>
<feature type="binding site" evidence="1">
    <location>
        <position position="58"/>
    </location>
    <ligand>
        <name>Fe cation</name>
        <dbReference type="ChEBI" id="CHEBI:24875"/>
    </ligand>
</feature>
<feature type="binding site" evidence="1">
    <location>
        <position position="128"/>
    </location>
    <ligand>
        <name>Fe cation</name>
        <dbReference type="ChEBI" id="CHEBI:24875"/>
    </ligand>
</feature>
<keyword id="KW-0071">Autoinducer synthesis</keyword>
<keyword id="KW-0408">Iron</keyword>
<keyword id="KW-0456">Lyase</keyword>
<keyword id="KW-0479">Metal-binding</keyword>
<keyword id="KW-0673">Quorum sensing</keyword>
<keyword id="KW-1185">Reference proteome</keyword>
<accession>Q9PN97</accession>
<accession>Q0P958</accession>
<sequence length="164" mass="18209">MPLLDSFKVDHTKMPAPAVRLAKVMKTPKGDDISVFDLRFCIPNKDIMSEKGTHTLEHLFAGFMRDHLNSNSVEIIDISPMGCRTGFYMSLIGTPDEKSIAKAWEAAMKDVLSVSDQSKIPELNIYQCGTCAMHSLDEAKQIAQKVLNLGISIINNKELKLENA</sequence>
<organism>
    <name type="scientific">Campylobacter jejuni subsp. jejuni serotype O:2 (strain ATCC 700819 / NCTC 11168)</name>
    <dbReference type="NCBI Taxonomy" id="192222"/>
    <lineage>
        <taxon>Bacteria</taxon>
        <taxon>Pseudomonadati</taxon>
        <taxon>Campylobacterota</taxon>
        <taxon>Epsilonproteobacteria</taxon>
        <taxon>Campylobacterales</taxon>
        <taxon>Campylobacteraceae</taxon>
        <taxon>Campylobacter</taxon>
    </lineage>
</organism>
<protein>
    <recommendedName>
        <fullName evidence="1">S-ribosylhomocysteine lyase</fullName>
        <ecNumber evidence="1">4.4.1.21</ecNumber>
    </recommendedName>
    <alternativeName>
        <fullName evidence="1">AI-2 synthesis protein</fullName>
    </alternativeName>
    <alternativeName>
        <fullName evidence="1">Autoinducer-2 production protein LuxS</fullName>
    </alternativeName>
</protein>
<name>LUXS_CAMJE</name>